<dbReference type="EMBL" id="AE016826">
    <property type="protein sequence ID" value="AAO27155.1"/>
    <property type="molecule type" value="Genomic_DNA"/>
</dbReference>
<dbReference type="RefSeq" id="WP_011091556.1">
    <property type="nucleotide sequence ID" value="NC_004545.1"/>
</dbReference>
<dbReference type="SMR" id="Q89A83"/>
<dbReference type="STRING" id="224915.bbp_449"/>
<dbReference type="KEGG" id="bab:bbp_449"/>
<dbReference type="eggNOG" id="COG1841">
    <property type="taxonomic scope" value="Bacteria"/>
</dbReference>
<dbReference type="HOGENOM" id="CLU_131047_1_4_6"/>
<dbReference type="OrthoDB" id="9812790at2"/>
<dbReference type="Proteomes" id="UP000000601">
    <property type="component" value="Chromosome"/>
</dbReference>
<dbReference type="GO" id="GO:0022625">
    <property type="term" value="C:cytosolic large ribosomal subunit"/>
    <property type="evidence" value="ECO:0007669"/>
    <property type="project" value="TreeGrafter"/>
</dbReference>
<dbReference type="GO" id="GO:0003735">
    <property type="term" value="F:structural constituent of ribosome"/>
    <property type="evidence" value="ECO:0007669"/>
    <property type="project" value="InterPro"/>
</dbReference>
<dbReference type="GO" id="GO:0006412">
    <property type="term" value="P:translation"/>
    <property type="evidence" value="ECO:0007669"/>
    <property type="project" value="UniProtKB-UniRule"/>
</dbReference>
<dbReference type="CDD" id="cd01658">
    <property type="entry name" value="Ribosomal_L30"/>
    <property type="match status" value="1"/>
</dbReference>
<dbReference type="Gene3D" id="3.30.1390.20">
    <property type="entry name" value="Ribosomal protein L30, ferredoxin-like fold domain"/>
    <property type="match status" value="1"/>
</dbReference>
<dbReference type="HAMAP" id="MF_01371_B">
    <property type="entry name" value="Ribosomal_uL30_B"/>
    <property type="match status" value="1"/>
</dbReference>
<dbReference type="InterPro" id="IPR036919">
    <property type="entry name" value="Ribo_uL30_ferredoxin-like_sf"/>
</dbReference>
<dbReference type="InterPro" id="IPR005996">
    <property type="entry name" value="Ribosomal_uL30_bac-type"/>
</dbReference>
<dbReference type="InterPro" id="IPR016082">
    <property type="entry name" value="Ribosomal_uL30_ferredoxin-like"/>
</dbReference>
<dbReference type="NCBIfam" id="TIGR01308">
    <property type="entry name" value="rpmD_bact"/>
    <property type="match status" value="1"/>
</dbReference>
<dbReference type="PANTHER" id="PTHR15892:SF2">
    <property type="entry name" value="LARGE RIBOSOMAL SUBUNIT PROTEIN UL30M"/>
    <property type="match status" value="1"/>
</dbReference>
<dbReference type="PANTHER" id="PTHR15892">
    <property type="entry name" value="MITOCHONDRIAL RIBOSOMAL PROTEIN L30"/>
    <property type="match status" value="1"/>
</dbReference>
<dbReference type="Pfam" id="PF00327">
    <property type="entry name" value="Ribosomal_L30"/>
    <property type="match status" value="1"/>
</dbReference>
<dbReference type="PIRSF" id="PIRSF002211">
    <property type="entry name" value="Ribosomal_L30_bac-type"/>
    <property type="match status" value="1"/>
</dbReference>
<dbReference type="SUPFAM" id="SSF55129">
    <property type="entry name" value="Ribosomal protein L30p/L7e"/>
    <property type="match status" value="1"/>
</dbReference>
<gene>
    <name evidence="1" type="primary">rpmD</name>
    <name type="ordered locus">bbp_449</name>
</gene>
<feature type="chain" id="PRO_0000104588" description="Large ribosomal subunit protein uL30">
    <location>
        <begin position="1"/>
        <end position="58"/>
    </location>
</feature>
<protein>
    <recommendedName>
        <fullName evidence="1">Large ribosomal subunit protein uL30</fullName>
    </recommendedName>
    <alternativeName>
        <fullName evidence="2">50S ribosomal protein L30</fullName>
    </alternativeName>
</protein>
<comment type="subunit">
    <text evidence="1">Part of the 50S ribosomal subunit.</text>
</comment>
<comment type="similarity">
    <text evidence="1">Belongs to the universal ribosomal protein uL30 family.</text>
</comment>
<sequence length="58" mass="6502">MIKLISITQIKSSIGRLPKHKATLSGLGLRYIGHTVLRKNTPSVRGMIKLLSFMLRIN</sequence>
<keyword id="KW-1185">Reference proteome</keyword>
<keyword id="KW-0687">Ribonucleoprotein</keyword>
<keyword id="KW-0689">Ribosomal protein</keyword>
<organism>
    <name type="scientific">Buchnera aphidicola subsp. Baizongia pistaciae (strain Bp)</name>
    <dbReference type="NCBI Taxonomy" id="224915"/>
    <lineage>
        <taxon>Bacteria</taxon>
        <taxon>Pseudomonadati</taxon>
        <taxon>Pseudomonadota</taxon>
        <taxon>Gammaproteobacteria</taxon>
        <taxon>Enterobacterales</taxon>
        <taxon>Erwiniaceae</taxon>
        <taxon>Buchnera</taxon>
    </lineage>
</organism>
<accession>Q89A83</accession>
<evidence type="ECO:0000255" key="1">
    <source>
        <dbReference type="HAMAP-Rule" id="MF_01371"/>
    </source>
</evidence>
<evidence type="ECO:0000305" key="2"/>
<name>RL30_BUCBP</name>
<reference key="1">
    <citation type="journal article" date="2003" name="Proc. Natl. Acad. Sci. U.S.A.">
        <title>Reductive genome evolution in Buchnera aphidicola.</title>
        <authorList>
            <person name="van Ham R.C.H.J."/>
            <person name="Kamerbeek J."/>
            <person name="Palacios C."/>
            <person name="Rausell C."/>
            <person name="Abascal F."/>
            <person name="Bastolla U."/>
            <person name="Fernandez J.M."/>
            <person name="Jimenez L."/>
            <person name="Postigo M."/>
            <person name="Silva F.J."/>
            <person name="Tamames J."/>
            <person name="Viguera E."/>
            <person name="Latorre A."/>
            <person name="Valencia A."/>
            <person name="Moran F."/>
            <person name="Moya A."/>
        </authorList>
    </citation>
    <scope>NUCLEOTIDE SEQUENCE [LARGE SCALE GENOMIC DNA]</scope>
    <source>
        <strain>Bp</strain>
    </source>
</reference>
<proteinExistence type="inferred from homology"/>